<comment type="function">
    <text evidence="1 3">Calcium-binding protein involved in calcium homeostasis and signal transduction. It plays a critical role in buffering intracellular calcium levels and modulating calcium-dependent signaling pathways. Predominantly expressed in specific neuronal populations, influences synaptic plasticity and neuronal excitability, contributing to learning and memory (By similarity). During embryonic development, it facilitates neuronal differentiation and maturation (PubMed:14664811).</text>
</comment>
<comment type="subcellular location">
    <subcellularLocation>
        <location evidence="1">Synapse</location>
    </subcellularLocation>
    <subcellularLocation>
        <location evidence="1">Cell projection</location>
        <location evidence="1">Dendrite</location>
    </subcellularLocation>
    <text evidence="1">Located in dendrioles, small dendrites that makes up a brush structure found as the terminal specialization of a dendrite of a unipolar brush cell.</text>
</comment>
<comment type="similarity">
    <text evidence="4">Belongs to the calbindin family.</text>
</comment>
<organism>
    <name type="scientific">Rattus norvegicus</name>
    <name type="common">Rat</name>
    <dbReference type="NCBI Taxonomy" id="10116"/>
    <lineage>
        <taxon>Eukaryota</taxon>
        <taxon>Metazoa</taxon>
        <taxon>Chordata</taxon>
        <taxon>Craniata</taxon>
        <taxon>Vertebrata</taxon>
        <taxon>Euteleostomi</taxon>
        <taxon>Mammalia</taxon>
        <taxon>Eutheria</taxon>
        <taxon>Euarchontoglires</taxon>
        <taxon>Glires</taxon>
        <taxon>Rodentia</taxon>
        <taxon>Myomorpha</taxon>
        <taxon>Muroidea</taxon>
        <taxon>Muridae</taxon>
        <taxon>Murinae</taxon>
        <taxon>Rattus</taxon>
    </lineage>
</organism>
<evidence type="ECO:0000250" key="1">
    <source>
        <dbReference type="UniProtKB" id="Q08331"/>
    </source>
</evidence>
<evidence type="ECO:0000255" key="2">
    <source>
        <dbReference type="PROSITE-ProRule" id="PRU00448"/>
    </source>
</evidence>
<evidence type="ECO:0000269" key="3">
    <source>
    </source>
</evidence>
<evidence type="ECO:0000305" key="4"/>
<evidence type="ECO:0007744" key="5">
    <source>
    </source>
</evidence>
<name>CALB2_RAT</name>
<protein>
    <recommendedName>
        <fullName>Calretinin</fullName>
        <shortName>CR</shortName>
    </recommendedName>
</protein>
<proteinExistence type="evidence at protein level"/>
<feature type="chain" id="PRO_0000073481" description="Calretinin">
    <location>
        <begin position="1"/>
        <end position="271"/>
    </location>
</feature>
<feature type="domain" description="EF-hand 1" evidence="2">
    <location>
        <begin position="16"/>
        <end position="51"/>
    </location>
</feature>
<feature type="domain" description="EF-hand 2" evidence="2">
    <location>
        <begin position="63"/>
        <end position="98"/>
    </location>
</feature>
<feature type="domain" description="EF-hand 3" evidence="2">
    <location>
        <begin position="107"/>
        <end position="142"/>
    </location>
</feature>
<feature type="domain" description="EF-hand 4" evidence="2">
    <location>
        <begin position="151"/>
        <end position="186"/>
    </location>
</feature>
<feature type="domain" description="EF-hand 5" evidence="2">
    <location>
        <begin position="195"/>
        <end position="230"/>
    </location>
</feature>
<feature type="domain" description="EF-hand 6" evidence="4">
    <location>
        <begin position="235"/>
        <end position="270"/>
    </location>
</feature>
<feature type="binding site" evidence="2">
    <location>
        <position position="29"/>
    </location>
    <ligand>
        <name>Ca(2+)</name>
        <dbReference type="ChEBI" id="CHEBI:29108"/>
        <label>1</label>
    </ligand>
</feature>
<feature type="binding site" evidence="2">
    <location>
        <position position="31"/>
    </location>
    <ligand>
        <name>Ca(2+)</name>
        <dbReference type="ChEBI" id="CHEBI:29108"/>
        <label>1</label>
    </ligand>
</feature>
<feature type="binding site" evidence="2">
    <location>
        <position position="33"/>
    </location>
    <ligand>
        <name>Ca(2+)</name>
        <dbReference type="ChEBI" id="CHEBI:29108"/>
        <label>1</label>
    </ligand>
</feature>
<feature type="binding site" evidence="2">
    <location>
        <position position="35"/>
    </location>
    <ligand>
        <name>Ca(2+)</name>
        <dbReference type="ChEBI" id="CHEBI:29108"/>
        <label>1</label>
    </ligand>
</feature>
<feature type="binding site" evidence="2">
    <location>
        <position position="40"/>
    </location>
    <ligand>
        <name>Ca(2+)</name>
        <dbReference type="ChEBI" id="CHEBI:29108"/>
        <label>1</label>
    </ligand>
</feature>
<feature type="binding site" evidence="2">
    <location>
        <position position="76"/>
    </location>
    <ligand>
        <name>Ca(2+)</name>
        <dbReference type="ChEBI" id="CHEBI:29108"/>
        <label>2</label>
    </ligand>
</feature>
<feature type="binding site" evidence="2">
    <location>
        <position position="78"/>
    </location>
    <ligand>
        <name>Ca(2+)</name>
        <dbReference type="ChEBI" id="CHEBI:29108"/>
        <label>2</label>
    </ligand>
</feature>
<feature type="binding site" evidence="2">
    <location>
        <position position="80"/>
    </location>
    <ligand>
        <name>Ca(2+)</name>
        <dbReference type="ChEBI" id="CHEBI:29108"/>
        <label>2</label>
    </ligand>
</feature>
<feature type="binding site" evidence="2">
    <location>
        <position position="82"/>
    </location>
    <ligand>
        <name>Ca(2+)</name>
        <dbReference type="ChEBI" id="CHEBI:29108"/>
        <label>2</label>
    </ligand>
</feature>
<feature type="binding site" evidence="2">
    <location>
        <position position="87"/>
    </location>
    <ligand>
        <name>Ca(2+)</name>
        <dbReference type="ChEBI" id="CHEBI:29108"/>
        <label>2</label>
    </ligand>
</feature>
<feature type="binding site" evidence="2">
    <location>
        <position position="120"/>
    </location>
    <ligand>
        <name>Ca(2+)</name>
        <dbReference type="ChEBI" id="CHEBI:29108"/>
        <label>3</label>
    </ligand>
</feature>
<feature type="binding site" evidence="2">
    <location>
        <position position="122"/>
    </location>
    <ligand>
        <name>Ca(2+)</name>
        <dbReference type="ChEBI" id="CHEBI:29108"/>
        <label>3</label>
    </ligand>
</feature>
<feature type="binding site" evidence="2">
    <location>
        <position position="124"/>
    </location>
    <ligand>
        <name>Ca(2+)</name>
        <dbReference type="ChEBI" id="CHEBI:29108"/>
        <label>3</label>
    </ligand>
</feature>
<feature type="binding site" evidence="2">
    <location>
        <position position="126"/>
    </location>
    <ligand>
        <name>Ca(2+)</name>
        <dbReference type="ChEBI" id="CHEBI:29108"/>
        <label>3</label>
    </ligand>
</feature>
<feature type="binding site" evidence="2">
    <location>
        <position position="131"/>
    </location>
    <ligand>
        <name>Ca(2+)</name>
        <dbReference type="ChEBI" id="CHEBI:29108"/>
        <label>3</label>
    </ligand>
</feature>
<feature type="binding site" evidence="2">
    <location>
        <position position="164"/>
    </location>
    <ligand>
        <name>Ca(2+)</name>
        <dbReference type="ChEBI" id="CHEBI:29108"/>
        <label>4</label>
    </ligand>
</feature>
<feature type="binding site" evidence="2">
    <location>
        <position position="166"/>
    </location>
    <ligand>
        <name>Ca(2+)</name>
        <dbReference type="ChEBI" id="CHEBI:29108"/>
        <label>4</label>
    </ligand>
</feature>
<feature type="binding site" evidence="2">
    <location>
        <position position="168"/>
    </location>
    <ligand>
        <name>Ca(2+)</name>
        <dbReference type="ChEBI" id="CHEBI:29108"/>
        <label>4</label>
    </ligand>
</feature>
<feature type="binding site" evidence="2">
    <location>
        <position position="170"/>
    </location>
    <ligand>
        <name>Ca(2+)</name>
        <dbReference type="ChEBI" id="CHEBI:29108"/>
        <label>4</label>
    </ligand>
</feature>
<feature type="binding site" evidence="2">
    <location>
        <position position="175"/>
    </location>
    <ligand>
        <name>Ca(2+)</name>
        <dbReference type="ChEBI" id="CHEBI:29108"/>
        <label>4</label>
    </ligand>
</feature>
<feature type="binding site" evidence="2">
    <location>
        <position position="208"/>
    </location>
    <ligand>
        <name>Ca(2+)</name>
        <dbReference type="ChEBI" id="CHEBI:29108"/>
        <label>5</label>
    </ligand>
</feature>
<feature type="binding site" evidence="2">
    <location>
        <position position="210"/>
    </location>
    <ligand>
        <name>Ca(2+)</name>
        <dbReference type="ChEBI" id="CHEBI:29108"/>
        <label>5</label>
    </ligand>
</feature>
<feature type="binding site" evidence="2">
    <location>
        <position position="212"/>
    </location>
    <ligand>
        <name>Ca(2+)</name>
        <dbReference type="ChEBI" id="CHEBI:29108"/>
        <label>5</label>
    </ligand>
</feature>
<feature type="binding site" evidence="2">
    <location>
        <position position="214"/>
    </location>
    <ligand>
        <name>Ca(2+)</name>
        <dbReference type="ChEBI" id="CHEBI:29108"/>
        <label>5</label>
    </ligand>
</feature>
<feature type="binding site" evidence="2">
    <location>
        <position position="219"/>
    </location>
    <ligand>
        <name>Ca(2+)</name>
        <dbReference type="ChEBI" id="CHEBI:29108"/>
        <label>5</label>
    </ligand>
</feature>
<feature type="modified residue" description="Phosphotyrosine" evidence="5">
    <location>
        <position position="214"/>
    </location>
</feature>
<gene>
    <name type="primary">Calb2</name>
</gene>
<accession>P47728</accession>
<dbReference type="EMBL" id="X66974">
    <property type="protein sequence ID" value="CAA47385.1"/>
    <property type="molecule type" value="mRNA"/>
</dbReference>
<dbReference type="EMBL" id="BC087603">
    <property type="protein sequence ID" value="AAH87603.1"/>
    <property type="molecule type" value="mRNA"/>
</dbReference>
<dbReference type="PIR" id="S25006">
    <property type="entry name" value="S25006"/>
</dbReference>
<dbReference type="RefSeq" id="NP_446440.1">
    <property type="nucleotide sequence ID" value="NM_053988.2"/>
</dbReference>
<dbReference type="SMR" id="P47728"/>
<dbReference type="FunCoup" id="P47728">
    <property type="interactions" value="627"/>
</dbReference>
<dbReference type="IntAct" id="P47728">
    <property type="interactions" value="1"/>
</dbReference>
<dbReference type="STRING" id="10116.ENSRNOP00000022943"/>
<dbReference type="iPTMnet" id="P47728"/>
<dbReference type="PhosphoSitePlus" id="P47728"/>
<dbReference type="SwissPalm" id="P47728"/>
<dbReference type="PaxDb" id="10116-ENSRNOP00000022943"/>
<dbReference type="ABCD" id="P47728">
    <property type="antibodies" value="2 sequenced antibodies"/>
</dbReference>
<dbReference type="Ensembl" id="ENSRNOT00000022943.5">
    <property type="protein sequence ID" value="ENSRNOP00000022943.2"/>
    <property type="gene ID" value="ENSRNOG00000016977.5"/>
</dbReference>
<dbReference type="GeneID" id="117059"/>
<dbReference type="KEGG" id="rno:117059"/>
<dbReference type="UCSC" id="RGD:620981">
    <property type="organism name" value="rat"/>
</dbReference>
<dbReference type="AGR" id="RGD:620981"/>
<dbReference type="CTD" id="794"/>
<dbReference type="RGD" id="620981">
    <property type="gene designation" value="Calb2"/>
</dbReference>
<dbReference type="eggNOG" id="KOG0027">
    <property type="taxonomic scope" value="Eukaryota"/>
</dbReference>
<dbReference type="GeneTree" id="ENSGT00950000183108"/>
<dbReference type="HOGENOM" id="CLU_054826_1_1_1"/>
<dbReference type="InParanoid" id="P47728"/>
<dbReference type="OMA" id="IVLCNEP"/>
<dbReference type="OrthoDB" id="8212at9989"/>
<dbReference type="PhylomeDB" id="P47728"/>
<dbReference type="TreeFam" id="TF325083"/>
<dbReference type="PRO" id="PR:P47728"/>
<dbReference type="Proteomes" id="UP000002494">
    <property type="component" value="Chromosome 19"/>
</dbReference>
<dbReference type="Bgee" id="ENSRNOG00000016977">
    <property type="expression patterns" value="Expressed in ovary and 10 other cell types or tissues"/>
</dbReference>
<dbReference type="GO" id="GO:0032437">
    <property type="term" value="C:cuticular plate"/>
    <property type="evidence" value="ECO:0000314"/>
    <property type="project" value="RGD"/>
</dbReference>
<dbReference type="GO" id="GO:0005829">
    <property type="term" value="C:cytosol"/>
    <property type="evidence" value="ECO:0000318"/>
    <property type="project" value="GO_Central"/>
</dbReference>
<dbReference type="GO" id="GO:0044293">
    <property type="term" value="C:dendriole"/>
    <property type="evidence" value="ECO:0000250"/>
    <property type="project" value="UniProtKB"/>
</dbReference>
<dbReference type="GO" id="GO:0030425">
    <property type="term" value="C:dendrite"/>
    <property type="evidence" value="ECO:0000318"/>
    <property type="project" value="GO_Central"/>
</dbReference>
<dbReference type="GO" id="GO:0005921">
    <property type="term" value="C:gap junction"/>
    <property type="evidence" value="ECO:0000266"/>
    <property type="project" value="RGD"/>
</dbReference>
<dbReference type="GO" id="GO:0005634">
    <property type="term" value="C:nucleus"/>
    <property type="evidence" value="ECO:0000318"/>
    <property type="project" value="GO_Central"/>
</dbReference>
<dbReference type="GO" id="GO:0098688">
    <property type="term" value="C:parallel fiber to Purkinje cell synapse"/>
    <property type="evidence" value="ECO:0000250"/>
    <property type="project" value="UniProtKB"/>
</dbReference>
<dbReference type="GO" id="GO:0032420">
    <property type="term" value="C:stereocilium"/>
    <property type="evidence" value="ECO:0000314"/>
    <property type="project" value="RGD"/>
</dbReference>
<dbReference type="GO" id="GO:0045202">
    <property type="term" value="C:synapse"/>
    <property type="evidence" value="ECO:0000314"/>
    <property type="project" value="SynGO"/>
</dbReference>
<dbReference type="GO" id="GO:0043195">
    <property type="term" value="C:terminal bouton"/>
    <property type="evidence" value="ECO:0007005"/>
    <property type="project" value="ParkinsonsUK-UCL"/>
</dbReference>
<dbReference type="GO" id="GO:0005509">
    <property type="term" value="F:calcium ion binding"/>
    <property type="evidence" value="ECO:0000314"/>
    <property type="project" value="RGD"/>
</dbReference>
<dbReference type="GO" id="GO:0099534">
    <property type="term" value="F:calcium ion binding involved in regulation of presynaptic cytosolic calcium ion concentration"/>
    <property type="evidence" value="ECO:0000250"/>
    <property type="project" value="UniProtKB"/>
</dbReference>
<dbReference type="GO" id="GO:0006874">
    <property type="term" value="P:intracellular calcium ion homeostasis"/>
    <property type="evidence" value="ECO:0000250"/>
    <property type="project" value="UniProtKB"/>
</dbReference>
<dbReference type="GO" id="GO:0048167">
    <property type="term" value="P:regulation of synaptic plasticity"/>
    <property type="evidence" value="ECO:0000250"/>
    <property type="project" value="UniProtKB"/>
</dbReference>
<dbReference type="GO" id="GO:0099536">
    <property type="term" value="P:synaptic signaling"/>
    <property type="evidence" value="ECO:0000250"/>
    <property type="project" value="UniProtKB"/>
</dbReference>
<dbReference type="CDD" id="cd16177">
    <property type="entry name" value="EFh_HEF_CR"/>
    <property type="match status" value="1"/>
</dbReference>
<dbReference type="FunFam" id="1.10.238.10:FF:000054">
    <property type="entry name" value="Calbindin 2"/>
    <property type="match status" value="1"/>
</dbReference>
<dbReference type="FunFam" id="1.10.238.10:FF:000165">
    <property type="entry name" value="Calbindin 2"/>
    <property type="match status" value="1"/>
</dbReference>
<dbReference type="FunFam" id="1.10.238.10:FF:000116">
    <property type="entry name" value="calretinin isoform X2"/>
    <property type="match status" value="1"/>
</dbReference>
<dbReference type="Gene3D" id="1.10.238.10">
    <property type="entry name" value="EF-hand"/>
    <property type="match status" value="3"/>
</dbReference>
<dbReference type="InterPro" id="IPR029646">
    <property type="entry name" value="CALB2"/>
</dbReference>
<dbReference type="InterPro" id="IPR051001">
    <property type="entry name" value="Calbindin_Ca-bind"/>
</dbReference>
<dbReference type="InterPro" id="IPR011992">
    <property type="entry name" value="EF-hand-dom_pair"/>
</dbReference>
<dbReference type="InterPro" id="IPR018247">
    <property type="entry name" value="EF_Hand_1_Ca_BS"/>
</dbReference>
<dbReference type="InterPro" id="IPR002048">
    <property type="entry name" value="EF_hand_dom"/>
</dbReference>
<dbReference type="PANTHER" id="PTHR19972">
    <property type="entry name" value="CALBINDIN"/>
    <property type="match status" value="1"/>
</dbReference>
<dbReference type="PANTHER" id="PTHR19972:SF4">
    <property type="entry name" value="CALRETININ"/>
    <property type="match status" value="1"/>
</dbReference>
<dbReference type="Pfam" id="PF00036">
    <property type="entry name" value="EF-hand_1"/>
    <property type="match status" value="1"/>
</dbReference>
<dbReference type="Pfam" id="PF13499">
    <property type="entry name" value="EF-hand_7"/>
    <property type="match status" value="2"/>
</dbReference>
<dbReference type="SMART" id="SM00054">
    <property type="entry name" value="EFh"/>
    <property type="match status" value="5"/>
</dbReference>
<dbReference type="SUPFAM" id="SSF47473">
    <property type="entry name" value="EF-hand"/>
    <property type="match status" value="2"/>
</dbReference>
<dbReference type="PROSITE" id="PS00018">
    <property type="entry name" value="EF_HAND_1"/>
    <property type="match status" value="5"/>
</dbReference>
<dbReference type="PROSITE" id="PS50222">
    <property type="entry name" value="EF_HAND_2"/>
    <property type="match status" value="5"/>
</dbReference>
<keyword id="KW-0106">Calcium</keyword>
<keyword id="KW-0966">Cell projection</keyword>
<keyword id="KW-0903">Direct protein sequencing</keyword>
<keyword id="KW-0479">Metal-binding</keyword>
<keyword id="KW-0597">Phosphoprotein</keyword>
<keyword id="KW-1185">Reference proteome</keyword>
<keyword id="KW-0677">Repeat</keyword>
<keyword id="KW-0770">Synapse</keyword>
<sequence>MAGPQQQPPYLHLAELTASQFLEIWKHFDADGNGYIEGKELENFFQELEKARKGSGMMSKSDNFGEKMKEFMQKYDKNSDGKIEMAELAQILPTEENFLLCFRQHVGSSAEFMEAWRKYDTDRSGYIEANELKGFLSDLLKKANRPYDEPKLQEYTQTILRMFDLNGDGKLGLSEMSRLLPVQENFLLKFQGMKLTSEEFNAIFTFYDKDGSGYIDENELDALLKDLYEKNKKEMNIQQLTTYRKSVMSLAEAGKLYRKDLEIVLCSEPPM</sequence>
<reference key="1">
    <citation type="journal article" date="1994" name="Biochim. Biophys. Acta">
        <title>Calretinin is expressed in the Leydig cells of rat testis.</title>
        <authorList>
            <person name="Strauss K.I."/>
            <person name="Jacobowitz D.M."/>
        </authorList>
    </citation>
    <scope>NUCLEOTIDE SEQUENCE [MRNA]</scope>
    <source>
        <strain>Sprague-Dawley</strain>
        <tissue>Brain</tissue>
    </source>
</reference>
<reference key="2">
    <citation type="journal article" date="2004" name="Genome Res.">
        <title>The status, quality, and expansion of the NIH full-length cDNA project: the Mammalian Gene Collection (MGC).</title>
        <authorList>
            <consortium name="The MGC Project Team"/>
        </authorList>
    </citation>
    <scope>NUCLEOTIDE SEQUENCE [LARGE SCALE MRNA]</scope>
    <source>
        <tissue>Brain</tissue>
    </source>
</reference>
<reference key="3">
    <citation type="submission" date="2007-07" db="UniProtKB">
        <authorList>
            <person name="Lubec G."/>
            <person name="Afjehi-Sadat L."/>
            <person name="Kang S.U."/>
        </authorList>
    </citation>
    <scope>PROTEIN SEQUENCE OF 83-103; 134-141; 152-161; 171-178 AND 246-255</scope>
    <scope>IDENTIFICATION BY MASS SPECTROMETRY</scope>
    <source>
        <strain>Sprague-Dawley</strain>
        <tissue>Brain</tissue>
        <tissue>Spinal cord</tissue>
    </source>
</reference>
<reference key="4">
    <citation type="journal article" date="1991" name="Biochemistry">
        <title>Brain calbindin-D28k and an Mr 29,000 calcium binding protein in cerebellum are different but related proteins: evidence obtained from sequence analysis by tandem mass spectrometry.</title>
        <authorList>
            <person name="Gabrielides C."/>
            <person name="McCormack A.L."/>
            <person name="Hunt D.F."/>
            <person name="Christakos S."/>
        </authorList>
    </citation>
    <scope>PARTIAL PROTEIN SEQUENCE</scope>
</reference>
<reference key="5">
    <citation type="journal article" date="2003" name="Mol. Cell. Neurosci.">
        <title>Transient calretinin expression defines early postmitotic step of neuronal differentiation in adult hippocampal neurogenesis of mice.</title>
        <authorList>
            <person name="Brandt M.D."/>
            <person name="Jessberger S."/>
            <person name="Steiner B."/>
            <person name="Kronenberg G."/>
            <person name="Reuter K."/>
            <person name="Bick-Sander A."/>
            <person name="von der Behrens W."/>
            <person name="Kempermann G."/>
        </authorList>
    </citation>
    <scope>FUNCTION</scope>
</reference>
<reference key="6">
    <citation type="journal article" date="2012" name="Nat. Commun.">
        <title>Quantitative maps of protein phosphorylation sites across 14 different rat organs and tissues.</title>
        <authorList>
            <person name="Lundby A."/>
            <person name="Secher A."/>
            <person name="Lage K."/>
            <person name="Nordsborg N.B."/>
            <person name="Dmytriyev A."/>
            <person name="Lundby C."/>
            <person name="Olsen J.V."/>
        </authorList>
    </citation>
    <scope>PHOSPHORYLATION [LARGE SCALE ANALYSIS] AT TYR-214</scope>
    <scope>IDENTIFICATION BY MASS SPECTROMETRY [LARGE SCALE ANALYSIS]</scope>
</reference>